<feature type="chain" id="PRO_0000322771" description="LexA repressor">
    <location>
        <begin position="1"/>
        <end position="200"/>
    </location>
</feature>
<feature type="DNA-binding region" description="H-T-H motif" evidence="1">
    <location>
        <begin position="28"/>
        <end position="48"/>
    </location>
</feature>
<feature type="active site" description="For autocatalytic cleavage activity" evidence="1">
    <location>
        <position position="117"/>
    </location>
</feature>
<feature type="active site" description="For autocatalytic cleavage activity" evidence="1">
    <location>
        <position position="154"/>
    </location>
</feature>
<feature type="site" description="Cleavage; by autolysis" evidence="1">
    <location>
        <begin position="82"/>
        <end position="83"/>
    </location>
</feature>
<evidence type="ECO:0000255" key="1">
    <source>
        <dbReference type="HAMAP-Rule" id="MF_00015"/>
    </source>
</evidence>
<evidence type="ECO:0000305" key="2"/>
<gene>
    <name evidence="1" type="primary">lexA</name>
    <name type="ordered locus">Tbd_1483</name>
</gene>
<name>LEXA_THIDA</name>
<comment type="function">
    <text evidence="1">Represses a number of genes involved in the response to DNA damage (SOS response), including recA and lexA. In the presence of single-stranded DNA, RecA interacts with LexA causing an autocatalytic cleavage which disrupts the DNA-binding part of LexA, leading to derepression of the SOS regulon and eventually DNA repair.</text>
</comment>
<comment type="catalytic activity">
    <reaction evidence="1">
        <text>Hydrolysis of Ala-|-Gly bond in repressor LexA.</text>
        <dbReference type="EC" id="3.4.21.88"/>
    </reaction>
</comment>
<comment type="subunit">
    <text evidence="1">Homodimer.</text>
</comment>
<comment type="similarity">
    <text evidence="1">Belongs to the peptidase S24 family.</text>
</comment>
<comment type="sequence caution" evidence="2">
    <conflict type="erroneous initiation">
        <sequence resource="EMBL-CDS" id="AAZ97436"/>
    </conflict>
</comment>
<organism>
    <name type="scientific">Thiobacillus denitrificans (strain ATCC 25259 / T1)</name>
    <dbReference type="NCBI Taxonomy" id="292415"/>
    <lineage>
        <taxon>Bacteria</taxon>
        <taxon>Pseudomonadati</taxon>
        <taxon>Pseudomonadota</taxon>
        <taxon>Betaproteobacteria</taxon>
        <taxon>Nitrosomonadales</taxon>
        <taxon>Thiobacillaceae</taxon>
        <taxon>Thiobacillus</taxon>
    </lineage>
</organism>
<dbReference type="EC" id="3.4.21.88" evidence="1"/>
<dbReference type="EMBL" id="CP000116">
    <property type="protein sequence ID" value="AAZ97436.1"/>
    <property type="status" value="ALT_INIT"/>
    <property type="molecule type" value="Genomic_DNA"/>
</dbReference>
<dbReference type="RefSeq" id="WP_041432518.1">
    <property type="nucleotide sequence ID" value="NC_007404.1"/>
</dbReference>
<dbReference type="SMR" id="Q3SIT9"/>
<dbReference type="STRING" id="292415.Tbd_1483"/>
<dbReference type="MEROPS" id="S24.001"/>
<dbReference type="KEGG" id="tbd:Tbd_1483"/>
<dbReference type="eggNOG" id="COG1974">
    <property type="taxonomic scope" value="Bacteria"/>
</dbReference>
<dbReference type="HOGENOM" id="CLU_066192_45_3_4"/>
<dbReference type="OrthoDB" id="9802364at2"/>
<dbReference type="Proteomes" id="UP000008291">
    <property type="component" value="Chromosome"/>
</dbReference>
<dbReference type="GO" id="GO:0003677">
    <property type="term" value="F:DNA binding"/>
    <property type="evidence" value="ECO:0007669"/>
    <property type="project" value="UniProtKB-UniRule"/>
</dbReference>
<dbReference type="GO" id="GO:0004252">
    <property type="term" value="F:serine-type endopeptidase activity"/>
    <property type="evidence" value="ECO:0007669"/>
    <property type="project" value="UniProtKB-UniRule"/>
</dbReference>
<dbReference type="GO" id="GO:0006281">
    <property type="term" value="P:DNA repair"/>
    <property type="evidence" value="ECO:0007669"/>
    <property type="project" value="UniProtKB-UniRule"/>
</dbReference>
<dbReference type="GO" id="GO:0006260">
    <property type="term" value="P:DNA replication"/>
    <property type="evidence" value="ECO:0007669"/>
    <property type="project" value="UniProtKB-UniRule"/>
</dbReference>
<dbReference type="GO" id="GO:0045892">
    <property type="term" value="P:negative regulation of DNA-templated transcription"/>
    <property type="evidence" value="ECO:0007669"/>
    <property type="project" value="UniProtKB-UniRule"/>
</dbReference>
<dbReference type="GO" id="GO:0006508">
    <property type="term" value="P:proteolysis"/>
    <property type="evidence" value="ECO:0007669"/>
    <property type="project" value="InterPro"/>
</dbReference>
<dbReference type="GO" id="GO:0009432">
    <property type="term" value="P:SOS response"/>
    <property type="evidence" value="ECO:0007669"/>
    <property type="project" value="UniProtKB-UniRule"/>
</dbReference>
<dbReference type="CDD" id="cd06529">
    <property type="entry name" value="S24_LexA-like"/>
    <property type="match status" value="1"/>
</dbReference>
<dbReference type="FunFam" id="1.10.10.10:FF:000009">
    <property type="entry name" value="LexA repressor"/>
    <property type="match status" value="1"/>
</dbReference>
<dbReference type="FunFam" id="2.10.109.10:FF:000001">
    <property type="entry name" value="LexA repressor"/>
    <property type="match status" value="1"/>
</dbReference>
<dbReference type="Gene3D" id="2.10.109.10">
    <property type="entry name" value="Umud Fragment, subunit A"/>
    <property type="match status" value="1"/>
</dbReference>
<dbReference type="Gene3D" id="1.10.10.10">
    <property type="entry name" value="Winged helix-like DNA-binding domain superfamily/Winged helix DNA-binding domain"/>
    <property type="match status" value="1"/>
</dbReference>
<dbReference type="HAMAP" id="MF_00015">
    <property type="entry name" value="LexA"/>
    <property type="match status" value="1"/>
</dbReference>
<dbReference type="InterPro" id="IPR006200">
    <property type="entry name" value="LexA"/>
</dbReference>
<dbReference type="InterPro" id="IPR039418">
    <property type="entry name" value="LexA-like"/>
</dbReference>
<dbReference type="InterPro" id="IPR036286">
    <property type="entry name" value="LexA/Signal_pep-like_sf"/>
</dbReference>
<dbReference type="InterPro" id="IPR006199">
    <property type="entry name" value="LexA_DNA-bd_dom"/>
</dbReference>
<dbReference type="InterPro" id="IPR050077">
    <property type="entry name" value="LexA_repressor"/>
</dbReference>
<dbReference type="InterPro" id="IPR006197">
    <property type="entry name" value="Peptidase_S24_LexA"/>
</dbReference>
<dbReference type="InterPro" id="IPR015927">
    <property type="entry name" value="Peptidase_S24_S26A/B/C"/>
</dbReference>
<dbReference type="InterPro" id="IPR036388">
    <property type="entry name" value="WH-like_DNA-bd_sf"/>
</dbReference>
<dbReference type="InterPro" id="IPR036390">
    <property type="entry name" value="WH_DNA-bd_sf"/>
</dbReference>
<dbReference type="NCBIfam" id="TIGR00498">
    <property type="entry name" value="lexA"/>
    <property type="match status" value="1"/>
</dbReference>
<dbReference type="PANTHER" id="PTHR33516">
    <property type="entry name" value="LEXA REPRESSOR"/>
    <property type="match status" value="1"/>
</dbReference>
<dbReference type="PANTHER" id="PTHR33516:SF2">
    <property type="entry name" value="LEXA REPRESSOR-RELATED"/>
    <property type="match status" value="1"/>
</dbReference>
<dbReference type="Pfam" id="PF01726">
    <property type="entry name" value="LexA_DNA_bind"/>
    <property type="match status" value="1"/>
</dbReference>
<dbReference type="Pfam" id="PF00717">
    <property type="entry name" value="Peptidase_S24"/>
    <property type="match status" value="1"/>
</dbReference>
<dbReference type="PRINTS" id="PR00726">
    <property type="entry name" value="LEXASERPTASE"/>
</dbReference>
<dbReference type="SUPFAM" id="SSF51306">
    <property type="entry name" value="LexA/Signal peptidase"/>
    <property type="match status" value="1"/>
</dbReference>
<dbReference type="SUPFAM" id="SSF46785">
    <property type="entry name" value="Winged helix' DNA-binding domain"/>
    <property type="match status" value="1"/>
</dbReference>
<protein>
    <recommendedName>
        <fullName evidence="1">LexA repressor</fullName>
        <ecNumber evidence="1">3.4.21.88</ecNumber>
    </recommendedName>
</protein>
<sequence>MRDLTPRQEEILNLIREWIDTTGSPPTRAEIAQHFGFSSPNAAEQHLKTLAKKGALELVSGASRGIRLPGGGGLAVVGQVAAGSPILAQENIERHVQVDTALFSPRADYLLKVRGQSMKDIGILDGDLLAVHRSAEARAGQVVVARIGDEVTVKRFQKRGHTVQLLPENADFEPIVVDLKRQELVIEGIAVGVIRSGRSL</sequence>
<proteinExistence type="inferred from homology"/>
<keyword id="KW-0068">Autocatalytic cleavage</keyword>
<keyword id="KW-0227">DNA damage</keyword>
<keyword id="KW-0234">DNA repair</keyword>
<keyword id="KW-0235">DNA replication</keyword>
<keyword id="KW-0238">DNA-binding</keyword>
<keyword id="KW-0378">Hydrolase</keyword>
<keyword id="KW-1185">Reference proteome</keyword>
<keyword id="KW-0678">Repressor</keyword>
<keyword id="KW-0742">SOS response</keyword>
<keyword id="KW-0804">Transcription</keyword>
<keyword id="KW-0805">Transcription regulation</keyword>
<accession>Q3SIT9</accession>
<reference key="1">
    <citation type="journal article" date="2006" name="J. Bacteriol.">
        <title>The genome sequence of the obligately chemolithoautotrophic, facultatively anaerobic bacterium Thiobacillus denitrificans.</title>
        <authorList>
            <person name="Beller H.R."/>
            <person name="Chain P.S."/>
            <person name="Letain T.E."/>
            <person name="Chakicherla A."/>
            <person name="Larimer F.W."/>
            <person name="Richardson P.M."/>
            <person name="Coleman M.A."/>
            <person name="Wood A.P."/>
            <person name="Kelly D.P."/>
        </authorList>
    </citation>
    <scope>NUCLEOTIDE SEQUENCE [LARGE SCALE GENOMIC DNA]</scope>
    <source>
        <strain>ATCC 25259 / T1</strain>
    </source>
</reference>